<dbReference type="EMBL" id="S78369">
    <property type="protein sequence ID" value="AAB34519.1"/>
    <property type="molecule type" value="mRNA"/>
</dbReference>
<dbReference type="EMBL" id="AF005384">
    <property type="protein sequence ID" value="AAB61751.1"/>
    <property type="molecule type" value="mRNA"/>
</dbReference>
<dbReference type="EMBL" id="D76418">
    <property type="protein sequence ID" value="BAA11173.1"/>
    <property type="molecule type" value="Genomic_DNA"/>
</dbReference>
<dbReference type="RefSeq" id="NP_001037006.1">
    <property type="nucleotide sequence ID" value="NM_001043541.1"/>
</dbReference>
<dbReference type="RefSeq" id="XP_062524867.1">
    <property type="nucleotide sequence ID" value="XM_062668883.1"/>
</dbReference>
<dbReference type="FunCoup" id="Q26431">
    <property type="interactions" value="40"/>
</dbReference>
<dbReference type="STRING" id="7091.Q26431"/>
<dbReference type="PaxDb" id="7091-BGIBMGA002747-TA"/>
<dbReference type="EnsemblMetazoa" id="NM_001043541.1">
    <property type="protein sequence ID" value="NP_001037006.1"/>
    <property type="gene ID" value="GeneID_692555"/>
</dbReference>
<dbReference type="GeneID" id="692555"/>
<dbReference type="KEGG" id="bmor:692555"/>
<dbReference type="CTD" id="692555"/>
<dbReference type="eggNOG" id="ENOG502SZ31">
    <property type="taxonomic scope" value="Eukaryota"/>
</dbReference>
<dbReference type="HOGENOM" id="CLU_1148183_0_0_1"/>
<dbReference type="InParanoid" id="Q26431"/>
<dbReference type="OrthoDB" id="607049at7088"/>
<dbReference type="Proteomes" id="UP000005204">
    <property type="component" value="Unassembled WGS sequence"/>
</dbReference>
<dbReference type="GO" id="GO:0005576">
    <property type="term" value="C:extracellular region"/>
    <property type="evidence" value="ECO:0007669"/>
    <property type="project" value="UniProtKB-SubCell"/>
</dbReference>
<dbReference type="GO" id="GO:0042742">
    <property type="term" value="P:defense response to bacterium"/>
    <property type="evidence" value="ECO:0007669"/>
    <property type="project" value="UniProtKB-KW"/>
</dbReference>
<dbReference type="GO" id="GO:0045087">
    <property type="term" value="P:innate immune response"/>
    <property type="evidence" value="ECO:0007669"/>
    <property type="project" value="UniProtKB-KW"/>
</dbReference>
<dbReference type="InterPro" id="IPR005521">
    <property type="entry name" value="Attacin_C"/>
</dbReference>
<dbReference type="InterPro" id="IPR005520">
    <property type="entry name" value="Attacin_N"/>
</dbReference>
<dbReference type="Pfam" id="PF03769">
    <property type="entry name" value="Attacin_C"/>
    <property type="match status" value="1"/>
</dbReference>
<dbReference type="Pfam" id="PF03768">
    <property type="entry name" value="Attacin_N"/>
    <property type="match status" value="1"/>
</dbReference>
<comment type="function">
    <text>Hemolymph antibacterial protein. Has a wide spectrum of activity against both Gram-positive and Gram-negative bacteria.</text>
</comment>
<comment type="subcellular location">
    <subcellularLocation>
        <location>Secreted</location>
    </subcellularLocation>
</comment>
<comment type="tissue specificity">
    <text>Highest expression in fat body and hemocytes and to a much lesser extent in Malpighian tubules, silk gland and midgut.</text>
</comment>
<comment type="induction">
    <text>By bacterial infection.</text>
</comment>
<comment type="similarity">
    <text evidence="2">Belongs to the attacin/sarcotoxin-2 family.</text>
</comment>
<keyword id="KW-0044">Antibiotic</keyword>
<keyword id="KW-0929">Antimicrobial</keyword>
<keyword id="KW-0165">Cleavage on pair of basic residues</keyword>
<keyword id="KW-0391">Immunity</keyword>
<keyword id="KW-0399">Innate immunity</keyword>
<keyword id="KW-1185">Reference proteome</keyword>
<keyword id="KW-0964">Secreted</keyword>
<keyword id="KW-0732">Signal</keyword>
<feature type="signal peptide" evidence="1">
    <location>
        <begin position="1"/>
        <end position="19"/>
    </location>
</feature>
<feature type="propeptide" id="PRO_0000004891" evidence="1">
    <location>
        <begin position="20"/>
        <end position="26"/>
    </location>
</feature>
<feature type="chain" id="PRO_0000004892" description="Attacin">
    <location>
        <begin position="27"/>
        <end position="214"/>
    </location>
</feature>
<organism>
    <name type="scientific">Bombyx mori</name>
    <name type="common">Silk moth</name>
    <dbReference type="NCBI Taxonomy" id="7091"/>
    <lineage>
        <taxon>Eukaryota</taxon>
        <taxon>Metazoa</taxon>
        <taxon>Ecdysozoa</taxon>
        <taxon>Arthropoda</taxon>
        <taxon>Hexapoda</taxon>
        <taxon>Insecta</taxon>
        <taxon>Pterygota</taxon>
        <taxon>Neoptera</taxon>
        <taxon>Endopterygota</taxon>
        <taxon>Lepidoptera</taxon>
        <taxon>Glossata</taxon>
        <taxon>Ditrysia</taxon>
        <taxon>Bombycoidea</taxon>
        <taxon>Bombycidae</taxon>
        <taxon>Bombycinae</taxon>
        <taxon>Bombyx</taxon>
    </lineage>
</organism>
<accession>Q26431</accession>
<accession>Q17210</accession>
<proteinExistence type="evidence at transcript level"/>
<sequence length="214" mass="22556">MSKSVALLLLCACLASGRHVPTRARRQAGSFTVNSDGTSGAALKVPLTGNDKNVLSAIGSADFNDRHKLSAASAGLALDNVNGHGLSLTGTRIPGFGEQLGVAGKVNLFHNNNHDLSAKAFAIRNSPSAIPNAPNFNTLGGGVDYMFKQKVGASLSAAHSDVINRNDYSAGGKLNLFRSPSSSLDFNAGFKKFDTPFYRSSWEPNVGFSFSKFF</sequence>
<name>ATT_BOMMO</name>
<evidence type="ECO:0000255" key="1"/>
<evidence type="ECO:0000305" key="2"/>
<protein>
    <recommendedName>
        <fullName>Attacin</fullName>
    </recommendedName>
    <alternativeName>
        <fullName>Nuecin</fullName>
    </alternativeName>
</protein>
<reference key="1">
    <citation type="journal article" date="1995" name="Insect Biochem. Mol. Biol.">
        <title>Characterization of a Bombyx mori cDNA encoding a novel member of the attacin family of insect antibacterial proteins.</title>
        <authorList>
            <person name="Sugiyama M."/>
            <person name="Kuniyoshi H."/>
            <person name="Kotani E."/>
            <person name="Taniai K."/>
            <person name="Kadono-Okuda K."/>
            <person name="Kato Y."/>
            <person name="Yamamoto M."/>
            <person name="Shimabukuro M."/>
            <person name="Chowdhury S."/>
            <person name="Xu J."/>
        </authorList>
    </citation>
    <scope>NUCLEOTIDE SEQUENCE [MRNA]</scope>
    <source>
        <strain>106 X Daizo</strain>
        <strain>Tokai X Asahi</strain>
        <tissue>Fat body</tissue>
    </source>
</reference>
<reference key="2">
    <citation type="submission" date="1997-05" db="EMBL/GenBank/DDBJ databases">
        <authorList>
            <person name="Yun E.Y."/>
            <person name="Kim S.H."/>
            <person name="Kang S.W."/>
            <person name="Jin B.R."/>
            <person name="Kim K.Y."/>
            <person name="Kim H.R."/>
            <person name="Lim S.H."/>
            <person name="Han M.S."/>
            <person name="Kang S.K."/>
        </authorList>
    </citation>
    <scope>NUCLEOTIDE SEQUENCE</scope>
</reference>
<reference key="3">
    <citation type="journal article" date="1996" name="Biochem. Biophys. Res. Commun.">
        <title>Nucleotide sequence of 5'-upstream region and expression of a silkworm gene encoding a new member of the attacin family.</title>
        <authorList>
            <person name="Taniai K."/>
            <person name="Ishii T."/>
            <person name="Sugiyama M."/>
            <person name="Miyanoshita A."/>
            <person name="Yamakawa M."/>
        </authorList>
    </citation>
    <scope>NUCLEOTIDE SEQUENCE [GENOMIC DNA] OF 1-78</scope>
    <source>
        <strain>Tokai X Asahi</strain>
        <tissue>Fat body</tissue>
    </source>
</reference>